<sequence length="444" mass="48916">MIINPKNYEHIFYSRGNPTVEVDLETTLGIFRAAVPSGASTGIYEALELRDNDKSRYLGKGVQQAIKNINEIIAPKLIGLDCREQKKIDNMMVQELDGSKTEWGWSKSKLGANAILAISMAICRAGAAANKTSLYKYVAQLAGKNTEKMILPVPCLNVINGGSHAGNKLSFQEFMIVPVGAPSFKEAMRYGAEVYHTLKSEIKKKYGIDATNVGDEGGFAPNILNAHEALDLLVASIKKAGYENKVKIAMDVAASEFYNSETKTYDLDFKTPNNDKSLVKTGQELVDLYIELVKKYPIISIEDPFDQDDWENYAKLTEAIGKDVQIVGDDLLVTNPTRIEKALEKKACNALLLKVNQIGSITEAIEACLLSQKNNWGVMVSHRSGETEDVFIADLVVALRTGQIKTGAPCRSERNAKYNQLFRIEESLGANGSFAGDKFRLQLN</sequence>
<evidence type="ECO:0000250" key="1">
    <source>
        <dbReference type="UniProtKB" id="P06733"/>
    </source>
</evidence>
<evidence type="ECO:0000250" key="2">
    <source>
        <dbReference type="UniProtKB" id="Q8IJN7"/>
    </source>
</evidence>
<evidence type="ECO:0000250" key="3">
    <source>
        <dbReference type="UniProtKB" id="W7JLR6"/>
    </source>
</evidence>
<evidence type="ECO:0000269" key="4">
    <source>
    </source>
</evidence>
<evidence type="ECO:0000269" key="5">
    <source>
    </source>
</evidence>
<evidence type="ECO:0000269" key="6">
    <source>
    </source>
</evidence>
<evidence type="ECO:0000303" key="7">
    <source>
    </source>
</evidence>
<evidence type="ECO:0000303" key="8">
    <source>
    </source>
</evidence>
<evidence type="ECO:0000305" key="9"/>
<accession>Q7RA60</accession>
<keyword id="KW-0007">Acetylation</keyword>
<keyword id="KW-1003">Cell membrane</keyword>
<keyword id="KW-0963">Cytoplasm</keyword>
<keyword id="KW-0206">Cytoskeleton</keyword>
<keyword id="KW-0324">Glycolysis</keyword>
<keyword id="KW-1017">Isopeptide bond</keyword>
<keyword id="KW-0456">Lyase</keyword>
<keyword id="KW-0460">Magnesium</keyword>
<keyword id="KW-0472">Membrane</keyword>
<keyword id="KW-0479">Metal-binding</keyword>
<keyword id="KW-0539">Nucleus</keyword>
<keyword id="KW-0597">Phosphoprotein</keyword>
<keyword id="KW-1185">Reference proteome</keyword>
<keyword id="KW-0832">Ubl conjugation</keyword>
<keyword id="KW-0926">Vacuole</keyword>
<dbReference type="EC" id="4.2.1.11" evidence="3"/>
<dbReference type="EMBL" id="AABL01002274">
    <property type="protein sequence ID" value="EAA18892.1"/>
    <property type="status" value="ALT_INIT"/>
    <property type="molecule type" value="Genomic_DNA"/>
</dbReference>
<dbReference type="SMR" id="Q7RA60"/>
<dbReference type="STRING" id="73239.Q7RA60"/>
<dbReference type="iPTMnet" id="Q7RA60"/>
<dbReference type="PaxDb" id="73239-Q7RA60"/>
<dbReference type="EnsemblProtists" id="EAA18892">
    <property type="protein sequence ID" value="EAA18892"/>
    <property type="gene ID" value="EAA18892"/>
</dbReference>
<dbReference type="InParanoid" id="Q7RA60"/>
<dbReference type="UniPathway" id="UPA00109">
    <property type="reaction ID" value="UER00187"/>
</dbReference>
<dbReference type="Proteomes" id="UP000008553">
    <property type="component" value="Unassembled WGS sequence"/>
</dbReference>
<dbReference type="GO" id="GO:0009986">
    <property type="term" value="C:cell surface"/>
    <property type="evidence" value="ECO:0007669"/>
    <property type="project" value="UniProtKB-SubCell"/>
</dbReference>
<dbReference type="GO" id="GO:0005856">
    <property type="term" value="C:cytoskeleton"/>
    <property type="evidence" value="ECO:0000314"/>
    <property type="project" value="UniProtKB"/>
</dbReference>
<dbReference type="GO" id="GO:0020020">
    <property type="term" value="C:food vacuole"/>
    <property type="evidence" value="ECO:0000314"/>
    <property type="project" value="UniProtKB"/>
</dbReference>
<dbReference type="GO" id="GO:0005634">
    <property type="term" value="C:nucleus"/>
    <property type="evidence" value="ECO:0007669"/>
    <property type="project" value="UniProtKB-SubCell"/>
</dbReference>
<dbReference type="GO" id="GO:0000015">
    <property type="term" value="C:phosphopyruvate hydratase complex"/>
    <property type="evidence" value="ECO:0007669"/>
    <property type="project" value="InterPro"/>
</dbReference>
<dbReference type="GO" id="GO:0005886">
    <property type="term" value="C:plasma membrane"/>
    <property type="evidence" value="ECO:0007669"/>
    <property type="project" value="UniProtKB-SubCell"/>
</dbReference>
<dbReference type="GO" id="GO:0000287">
    <property type="term" value="F:magnesium ion binding"/>
    <property type="evidence" value="ECO:0007669"/>
    <property type="project" value="InterPro"/>
</dbReference>
<dbReference type="GO" id="GO:0004634">
    <property type="term" value="F:phosphopyruvate hydratase activity"/>
    <property type="evidence" value="ECO:0007669"/>
    <property type="project" value="UniProtKB-EC"/>
</dbReference>
<dbReference type="GO" id="GO:0006096">
    <property type="term" value="P:glycolytic process"/>
    <property type="evidence" value="ECO:0007669"/>
    <property type="project" value="UniProtKB-UniPathway"/>
</dbReference>
<dbReference type="CDD" id="cd03313">
    <property type="entry name" value="enolase"/>
    <property type="match status" value="1"/>
</dbReference>
<dbReference type="FunFam" id="3.30.390.10:FF:000001">
    <property type="entry name" value="Enolase"/>
    <property type="match status" value="1"/>
</dbReference>
<dbReference type="FunFam" id="3.20.20.120:FF:000002">
    <property type="entry name" value="Enolase 1"/>
    <property type="match status" value="1"/>
</dbReference>
<dbReference type="Gene3D" id="3.20.20.120">
    <property type="entry name" value="Enolase-like C-terminal domain"/>
    <property type="match status" value="1"/>
</dbReference>
<dbReference type="Gene3D" id="3.30.390.10">
    <property type="entry name" value="Enolase-like, N-terminal domain"/>
    <property type="match status" value="1"/>
</dbReference>
<dbReference type="HAMAP" id="MF_00318">
    <property type="entry name" value="Enolase"/>
    <property type="match status" value="1"/>
</dbReference>
<dbReference type="InterPro" id="IPR000941">
    <property type="entry name" value="Enolase"/>
</dbReference>
<dbReference type="InterPro" id="IPR036849">
    <property type="entry name" value="Enolase-like_C_sf"/>
</dbReference>
<dbReference type="InterPro" id="IPR029017">
    <property type="entry name" value="Enolase-like_N"/>
</dbReference>
<dbReference type="InterPro" id="IPR020810">
    <property type="entry name" value="Enolase_C"/>
</dbReference>
<dbReference type="InterPro" id="IPR020809">
    <property type="entry name" value="Enolase_CS"/>
</dbReference>
<dbReference type="InterPro" id="IPR020811">
    <property type="entry name" value="Enolase_N"/>
</dbReference>
<dbReference type="NCBIfam" id="TIGR01060">
    <property type="entry name" value="eno"/>
    <property type="match status" value="1"/>
</dbReference>
<dbReference type="PANTHER" id="PTHR11902">
    <property type="entry name" value="ENOLASE"/>
    <property type="match status" value="1"/>
</dbReference>
<dbReference type="PANTHER" id="PTHR11902:SF1">
    <property type="entry name" value="ENOLASE"/>
    <property type="match status" value="1"/>
</dbReference>
<dbReference type="Pfam" id="PF00113">
    <property type="entry name" value="Enolase_C"/>
    <property type="match status" value="1"/>
</dbReference>
<dbReference type="Pfam" id="PF03952">
    <property type="entry name" value="Enolase_N"/>
    <property type="match status" value="1"/>
</dbReference>
<dbReference type="PIRSF" id="PIRSF001400">
    <property type="entry name" value="Enolase"/>
    <property type="match status" value="1"/>
</dbReference>
<dbReference type="PRINTS" id="PR00148">
    <property type="entry name" value="ENOLASE"/>
</dbReference>
<dbReference type="SFLD" id="SFLDF00002">
    <property type="entry name" value="enolase"/>
    <property type="match status" value="1"/>
</dbReference>
<dbReference type="SFLD" id="SFLDG00178">
    <property type="entry name" value="enolase"/>
    <property type="match status" value="1"/>
</dbReference>
<dbReference type="SMART" id="SM01192">
    <property type="entry name" value="Enolase_C"/>
    <property type="match status" value="1"/>
</dbReference>
<dbReference type="SMART" id="SM01193">
    <property type="entry name" value="Enolase_N"/>
    <property type="match status" value="1"/>
</dbReference>
<dbReference type="SUPFAM" id="SSF51604">
    <property type="entry name" value="Enolase C-terminal domain-like"/>
    <property type="match status" value="1"/>
</dbReference>
<dbReference type="SUPFAM" id="SSF54826">
    <property type="entry name" value="Enolase N-terminal domain-like"/>
    <property type="match status" value="1"/>
</dbReference>
<dbReference type="PROSITE" id="PS00164">
    <property type="entry name" value="ENOLASE"/>
    <property type="match status" value="1"/>
</dbReference>
<protein>
    <recommendedName>
        <fullName evidence="7">Enolase</fullName>
        <shortName evidence="8">PfENO</shortName>
        <ecNumber evidence="3">4.2.1.11</ecNumber>
    </recommendedName>
    <alternativeName>
        <fullName evidence="9">2-phospho-D-glycerate hydro-lyase</fullName>
    </alternativeName>
    <alternativeName>
        <fullName evidence="9">2-phosphoglycerate dehydratase</fullName>
    </alternativeName>
</protein>
<comment type="function">
    <text evidence="3">Glycolytic enzyme that catalyzes the conversion of 2-phosphoglycerate to phosphoenolpyruvate (By similarity). In addition to glycolysis, involved in various processes such as parasite development and invasion (By similarity). Plays an essential role during ookinete invasion of the mosquito vector midgut by mediating the interaction of the ookinete with the midgut epithelium and, further, by binding to mammalian host plasminogen in the blood meal, whose conversion to active plasmin promotes the invasion process (By similarity).</text>
</comment>
<comment type="catalytic activity">
    <reaction evidence="3">
        <text>(2R)-2-phosphoglycerate = phosphoenolpyruvate + H2O</text>
        <dbReference type="Rhea" id="RHEA:10164"/>
        <dbReference type="ChEBI" id="CHEBI:15377"/>
        <dbReference type="ChEBI" id="CHEBI:58289"/>
        <dbReference type="ChEBI" id="CHEBI:58702"/>
        <dbReference type="EC" id="4.2.1.11"/>
    </reaction>
    <physiologicalReaction direction="left-to-right" evidence="3">
        <dbReference type="Rhea" id="RHEA:10165"/>
    </physiologicalReaction>
    <physiologicalReaction direction="right-to-left" evidence="3">
        <dbReference type="Rhea" id="RHEA:10166"/>
    </physiologicalReaction>
</comment>
<comment type="cofactor">
    <cofactor evidence="3">
        <name>Mg(2+)</name>
        <dbReference type="ChEBI" id="CHEBI:18420"/>
    </cofactor>
    <text evidence="2 3">Binds 2 Mg(2+) ions per subunit (By similarity). Mg(2+) is required for catalysis and for stabilizing the dimer (By similarity). Unlike for mammalian and yeast enolases, Mg(2+) is dispensable to form an active closed conformation (By similarity). Inhibited by high levels of Mg(2+) (By similarity).</text>
</comment>
<comment type="pathway">
    <text evidence="2">Carbohydrate degradation; glycolysis; pyruvate from D-glyceraldehyde 3-phosphate: step 4/5.</text>
</comment>
<comment type="subunit">
    <text evidence="2 3">Homodimer (By similarity). Forms a complex at least composed of DegP, ENO and HSP70 (By similarity). Interacts with G-actin (By similarity). Interacts (via the DKSLVK motif) with mammalian host PLG/plasminogen (present in the mosquito blood meal); the interaction occurs at the ookinete cell surface and is required for ookinete invasion of the mosquito midgut (By similarity). Interacts with A.gambiae EBP; depending on the Plasmodium species, the interaction is either involved in ookinete invasion of the mosquito midgut (P.berghei) or is dispensable (P.falciparum) (By similarity).</text>
</comment>
<comment type="subcellular location">
    <subcellularLocation>
        <location evidence="2">Cytoplasm</location>
    </subcellularLocation>
    <subcellularLocation>
        <location evidence="2">Nucleus</location>
    </subcellularLocation>
    <subcellularLocation>
        <location evidence="6">Cytoplasm</location>
        <location evidence="6">Cytoskeleton</location>
    </subcellularLocation>
    <subcellularLocation>
        <location evidence="2">Cell surface</location>
    </subcellularLocation>
    <subcellularLocation>
        <location evidence="4">Cell membrane</location>
        <topology evidence="9">Peripheral membrane protein</topology>
        <orientation evidence="4">Cytoplasmic side</orientation>
    </subcellularLocation>
    <subcellularLocation>
        <location evidence="5 6">Vacuole</location>
    </subcellularLocation>
    <text evidence="2 3 4 6">Partially localizes to the nucleus in rings and trophozoites. Localization to the nucleus and food vacuole is higher in early and mid-stage trophozoites compared to the late-stage trophozoites and schizonts (By similarity). In the nucleus, localizes to heterochromatin region (By similarity). In rings, nuclear localization is dependent on the actin cytoskeleton (By similarity). In the trophozoite food vacuole, colocalizes with hemozoin, a product of heme detoxification (By similarity). Localizes to the cell surface of merozoites (By similarity). In gametocytes, predominantly localizes to the actin cytoskeleton (By similarity). In sporozoites, localizes to punctate structures beneath the cell membrane (PubMed:19642995). Localizes to the cell surface of ookinetes, especially on the apical pellicle complex that is involved in invasion (By similarity). When phosphorylated at Thr-337, localizes to the cytoskeleton (PubMed:24009698). When phosphorylated at Ser-40, localizes to the cytoplasm (By similarity). When ubiquitinated at Lys-136, acetylated at Lys-131 and Lys-373 and phosphorylated at Tyr-137, localizes to the food vacuole (PubMed:24009698). When triubiquitinated at Lys-136, appears to colocalize with hemozoin in the food vacuole (PubMed:24009698).</text>
</comment>
<comment type="developmental stage">
    <text evidence="4">Expressed in sporozoites (mosquito salivary gland stage) (at protein level).</text>
</comment>
<comment type="domain">
    <text evidence="2">The pentapeptide insert motif is required for the stabilization of the apo-enzyme in an active closed conformation, independently of Mg(2+) binding. The motif is also required for homodimerization. This motif is only present in Apicomplexa and plant enolases.</text>
</comment>
<comment type="domain">
    <text evidence="3">The DKSLVK motif binds to the lysine-binding Kringle domains of plasminogen from various mammalian species. This motif is present only in enolases of plant and several microbial pathogens including Plasmodium species.</text>
</comment>
<comment type="similarity">
    <text evidence="9">Belongs to the enolase family.</text>
</comment>
<comment type="sequence caution" evidence="9">
    <conflict type="erroneous initiation">
        <sequence resource="EMBL-CDS" id="EAA18892"/>
    </conflict>
</comment>
<reference key="1">
    <citation type="journal article" date="2002" name="Nature">
        <title>Genome sequence and comparative analysis of the model rodent malaria parasite Plasmodium yoelii yoelii.</title>
        <authorList>
            <person name="Carlton J.M."/>
            <person name="Angiuoli S.V."/>
            <person name="Suh B.B."/>
            <person name="Kooij T.W."/>
            <person name="Pertea M."/>
            <person name="Silva J.C."/>
            <person name="Ermolaeva M.D."/>
            <person name="Allen J.E."/>
            <person name="Selengut J.D."/>
            <person name="Koo H.L."/>
            <person name="Peterson J.D."/>
            <person name="Pop M."/>
            <person name="Kosack D.S."/>
            <person name="Shumway M.F."/>
            <person name="Bidwell S.L."/>
            <person name="Shallom S.J."/>
            <person name="van Aken S.E."/>
            <person name="Riedmuller S.B."/>
            <person name="Feldblyum T.V."/>
            <person name="Cho J.K."/>
            <person name="Quackenbush J."/>
            <person name="Sedegah M."/>
            <person name="Shoaibi A."/>
            <person name="Cummings L.M."/>
            <person name="Florens L."/>
            <person name="Yates J.R. III"/>
            <person name="Raine J.D."/>
            <person name="Sinden R.E."/>
            <person name="Harris M.A."/>
            <person name="Cunningham D.A."/>
            <person name="Preiser P.R."/>
            <person name="Bergman L.W."/>
            <person name="Vaidya A.B."/>
            <person name="van Lin L.H."/>
            <person name="Janse C.J."/>
            <person name="Waters A.P."/>
            <person name="Smith H.O."/>
            <person name="White O.R."/>
            <person name="Salzberg S.L."/>
            <person name="Venter J.C."/>
            <person name="Fraser C.M."/>
            <person name="Hoffman S.L."/>
            <person name="Gardner M.J."/>
            <person name="Carucci D.J."/>
        </authorList>
    </citation>
    <scope>NUCLEOTIDE SEQUENCE [LARGE SCALE GENOMIC DNA]</scope>
    <source>
        <strain>17XNL</strain>
    </source>
</reference>
<reference key="2">
    <citation type="journal article" date="2009" name="Malar. J.">
        <title>Plasmodium falciparum enolase: stage-specific expression and sub-cellular localization.</title>
        <authorList>
            <person name="Bhowmick I.P."/>
            <person name="Kumar N."/>
            <person name="Sharma S."/>
            <person name="Coppens I."/>
            <person name="Jarori G.K."/>
        </authorList>
    </citation>
    <scope>SUBCELLULAR LOCATION</scope>
    <scope>DEVELOPMENTAL STAGE</scope>
</reference>
<reference key="3">
    <citation type="journal article" date="2011" name="Mol. Biochem. Parasitol.">
        <title>Plasmodium falciparum enolase complements yeast enolase functions and associates with the parasite food vacuole.</title>
        <authorList>
            <person name="Das S."/>
            <person name="Shevade S."/>
            <person name="LaCount D.J."/>
            <person name="Jarori G.K."/>
        </authorList>
    </citation>
    <scope>SUBCELLULAR LOCATION</scope>
</reference>
<reference key="4">
    <citation type="journal article" date="2013" name="PLoS ONE">
        <title>Food vacuole associated enolase in plasmodium undergoes multiple post-translational modifications: evidence for atypical ubiquitination.</title>
        <authorList>
            <person name="Shevade S."/>
            <person name="Jindal N."/>
            <person name="Dutta S."/>
            <person name="Jarori G.K."/>
        </authorList>
    </citation>
    <scope>SUBCELLULAR LOCATION</scope>
    <scope>IDENTIFICATION BY MASS SPECTROMETRY</scope>
    <scope>PHOSPHORYLATION AT TYR-137 AND THR-337</scope>
    <scope>ACETYLATION AT LYS-131 AND LYS-373</scope>
    <scope>UBIQUITINATION AT LYS-136</scope>
</reference>
<proteinExistence type="evidence at protein level"/>
<name>ENO_PLAYO</name>
<organism>
    <name type="scientific">Plasmodium yoelii yoelii</name>
    <dbReference type="NCBI Taxonomy" id="73239"/>
    <lineage>
        <taxon>Eukaryota</taxon>
        <taxon>Sar</taxon>
        <taxon>Alveolata</taxon>
        <taxon>Apicomplexa</taxon>
        <taxon>Aconoidasida</taxon>
        <taxon>Haemosporida</taxon>
        <taxon>Plasmodiidae</taxon>
        <taxon>Plasmodium</taxon>
        <taxon>Plasmodium (Vinckeia)</taxon>
    </lineage>
</organism>
<feature type="chain" id="PRO_0000134092" description="Enolase">
    <location>
        <begin position="1"/>
        <end position="444"/>
    </location>
</feature>
<feature type="short sequence motif" description="Pentapeptide insert" evidence="2">
    <location>
        <begin position="102"/>
        <end position="106"/>
    </location>
</feature>
<feature type="short sequence motif" description="DKSLVK motif" evidence="3">
    <location>
        <begin position="275"/>
        <end position="280"/>
    </location>
</feature>
<feature type="active site" description="Proton donor" evidence="1">
    <location>
        <position position="216"/>
    </location>
</feature>
<feature type="active site" description="Proton acceptor" evidence="1">
    <location>
        <position position="354"/>
    </location>
</feature>
<feature type="binding site" evidence="1">
    <location>
        <position position="40"/>
    </location>
    <ligand>
        <name>Mg(2+)</name>
        <dbReference type="ChEBI" id="CHEBI:18420"/>
        <label>1</label>
    </ligand>
</feature>
<feature type="binding site" evidence="1">
    <location>
        <position position="164"/>
    </location>
    <ligand>
        <name>substrate</name>
    </ligand>
</feature>
<feature type="binding site" evidence="1">
    <location>
        <position position="173"/>
    </location>
    <ligand>
        <name>substrate</name>
    </ligand>
</feature>
<feature type="binding site" evidence="1">
    <location>
        <position position="251"/>
    </location>
    <ligand>
        <name>Mg(2+)</name>
        <dbReference type="ChEBI" id="CHEBI:18420"/>
        <label>2</label>
    </ligand>
</feature>
<feature type="binding site" evidence="1">
    <location>
        <position position="302"/>
    </location>
    <ligand>
        <name>Mg(2+)</name>
        <dbReference type="ChEBI" id="CHEBI:18420"/>
        <label>2</label>
    </ligand>
</feature>
<feature type="binding site" evidence="1">
    <location>
        <position position="302"/>
    </location>
    <ligand>
        <name>substrate</name>
    </ligand>
</feature>
<feature type="binding site" evidence="1">
    <location>
        <position position="329"/>
    </location>
    <ligand>
        <name>Mg(2+)</name>
        <dbReference type="ChEBI" id="CHEBI:18420"/>
        <label>2</label>
    </ligand>
</feature>
<feature type="binding site" evidence="1">
    <location>
        <position position="329"/>
    </location>
    <ligand>
        <name>substrate</name>
    </ligand>
</feature>
<feature type="binding site" evidence="1">
    <location>
        <begin position="381"/>
        <end position="384"/>
    </location>
    <ligand>
        <name>substrate</name>
    </ligand>
</feature>
<feature type="binding site" evidence="1">
    <location>
        <position position="405"/>
    </location>
    <ligand>
        <name>substrate</name>
    </ligand>
</feature>
<feature type="modified residue" description="Phosphoserine" evidence="2">
    <location>
        <position position="40"/>
    </location>
</feature>
<feature type="modified residue" description="N6-acetyllysine" evidence="6">
    <location>
        <position position="131"/>
    </location>
</feature>
<feature type="modified residue" description="Phosphotyrosine" evidence="6">
    <location>
        <position position="137"/>
    </location>
</feature>
<feature type="modified residue" description="Phosphothreonine" evidence="6">
    <location>
        <position position="337"/>
    </location>
</feature>
<feature type="modified residue" description="N6-acetyllysine" evidence="6">
    <location>
        <position position="373"/>
    </location>
</feature>
<feature type="cross-link" description="Glycyl lysine isopeptide (Lys-Gly) (interchain with G-Cter in ubiquitin)" evidence="6">
    <location>
        <position position="136"/>
    </location>
</feature>
<gene>
    <name evidence="8" type="primary">ENO</name>
    <name type="ORF">PY06644</name>
</gene>